<keyword id="KW-1185">Reference proteome</keyword>
<accession>Q66639</accession>
<organismHost>
    <name type="scientific">Equus caballus</name>
    <name type="common">Horse</name>
    <dbReference type="NCBI Taxonomy" id="9796"/>
</organismHost>
<proteinExistence type="inferred from homology"/>
<feature type="chain" id="PRO_0000406072" description="Gene 35 protein">
    <location>
        <begin position="1"/>
        <end position="154"/>
    </location>
</feature>
<feature type="region of interest" description="Disordered" evidence="1">
    <location>
        <begin position="116"/>
        <end position="137"/>
    </location>
</feature>
<evidence type="ECO:0000256" key="1">
    <source>
        <dbReference type="SAM" id="MobiDB-lite"/>
    </source>
</evidence>
<evidence type="ECO:0000305" key="2"/>
<protein>
    <recommendedName>
        <fullName>Gene 35 protein</fullName>
    </recommendedName>
</protein>
<name>UL96_EHV2</name>
<comment type="similarity">
    <text evidence="2">Belongs to the herpesviridae UL96 family.</text>
</comment>
<reference key="1">
    <citation type="journal article" date="1995" name="J. Mol. Biol.">
        <title>The DNA sequence of equine herpesvirus 2.</title>
        <authorList>
            <person name="Telford E.A.R."/>
            <person name="Watson M.S."/>
            <person name="Aird H.C."/>
            <person name="Perry J."/>
            <person name="Davison A.J."/>
        </authorList>
    </citation>
    <scope>NUCLEOTIDE SEQUENCE [LARGE SCALE GENOMIC DNA]</scope>
</reference>
<organism>
    <name type="scientific">Equine herpesvirus 2 (strain 86/87)</name>
    <name type="common">EHV-2</name>
    <dbReference type="NCBI Taxonomy" id="82831"/>
    <lineage>
        <taxon>Viruses</taxon>
        <taxon>Duplodnaviria</taxon>
        <taxon>Heunggongvirae</taxon>
        <taxon>Peploviricota</taxon>
        <taxon>Herviviricetes</taxon>
        <taxon>Herpesvirales</taxon>
        <taxon>Orthoherpesviridae</taxon>
        <taxon>Gammaherpesvirinae</taxon>
        <taxon>Percavirus</taxon>
        <taxon>Percavirus equidgamma2</taxon>
        <taxon>Equid gammaherpesvirus 2</taxon>
    </lineage>
</organism>
<gene>
    <name type="primary">35</name>
</gene>
<sequence length="154" mass="16997">MASASRDQQRDLIARGLEAEVNKRAAVSLFDRFGPSNPLFKKQYADTRLSLRSYHSCSQTERVRASLELVNLTIETKNKERALLSKLNRGAVARVEKLCDAVADLREEFDLELDSLTAAQDDPVEGGPEPADVADTITEWRAEALPSVPAEDAP</sequence>
<dbReference type="EMBL" id="U20824">
    <property type="protein sequence ID" value="AAC13823.1"/>
    <property type="molecule type" value="Genomic_DNA"/>
</dbReference>
<dbReference type="PIR" id="S55630">
    <property type="entry name" value="S55630"/>
</dbReference>
<dbReference type="SMR" id="Q66639"/>
<dbReference type="KEGG" id="vg:1461031"/>
<dbReference type="Proteomes" id="UP000007083">
    <property type="component" value="Segment"/>
</dbReference>
<dbReference type="InterPro" id="IPR008566">
    <property type="entry name" value="DUF848"/>
</dbReference>
<dbReference type="Pfam" id="PF05852">
    <property type="entry name" value="DUF848"/>
    <property type="match status" value="1"/>
</dbReference>